<comment type="function">
    <text evidence="6 8 11 12 17">Transmembrane glycoprotein that functions as both a receptor and an adhesion molecule playing a crucial role in cell adhesion, motility, migration and invasion (PubMed:9616226, PubMed:31413112). Extracellular domain enables binding to extracellular matrix proteins, such as laminin, integrin and other ligands while its intracellular domain interacts with cytoskeletal proteins like hemoglobin, facilitating cell signal transduction (PubMed:17158232). Serves as a receptor for laminin alpha-5/LAMA5 to promote cell adhesion (PubMed:15975931). Mechanistically, JAK2 induces BCAM phosphorylation and activates its adhesion to laminin by stimulating a Rap1/AKT signaling pathway in the absence of EPOR (PubMed:23160466).</text>
</comment>
<comment type="subunit">
    <text evidence="8">Homodimer (PubMed:31413112). Interacts with ITGA4:ITGB1 (PubMed:17158232). Interacts with spectrins SPTA1 and SPTB1.</text>
</comment>
<comment type="interaction">
    <interactant intactId="EBI-10212133">
        <id>P50895</id>
    </interactant>
    <interactant intactId="EBI-746999">
        <id>O95198</id>
        <label>KLHL2</label>
    </interactant>
    <organismsDiffer>false</organismsDiffer>
    <experiments>6</experiments>
</comment>
<comment type="interaction">
    <interactant intactId="EBI-10212133">
        <id>P50895</id>
    </interactant>
    <interactant intactId="EBI-11959885">
        <id>Q07627</id>
        <label>KRTAP1-1</label>
    </interactant>
    <organismsDiffer>false</organismsDiffer>
    <experiments>3</experiments>
</comment>
<comment type="interaction">
    <interactant intactId="EBI-10212133">
        <id>P50895</id>
    </interactant>
    <interactant intactId="EBI-11749135">
        <id>Q8IUG1</id>
        <label>KRTAP1-3</label>
    </interactant>
    <organismsDiffer>false</organismsDiffer>
    <experiments>3</experiments>
</comment>
<comment type="interaction">
    <interactant intactId="EBI-10212133">
        <id>P50895</id>
    </interactant>
    <interactant intactId="EBI-724076">
        <id>Q99750</id>
        <label>MDFI</label>
    </interactant>
    <organismsDiffer>false</organismsDiffer>
    <experiments>3</experiments>
</comment>
<comment type="interaction">
    <interactant intactId="EBI-10212133">
        <id>P50895</id>
    </interactant>
    <interactant intactId="EBI-22310682">
        <id>P0DPK4</id>
        <label>NOTCH2NLC</label>
    </interactant>
    <organismsDiffer>false</organismsDiffer>
    <experiments>3</experiments>
</comment>
<comment type="interaction">
    <interactant intactId="EBI-10212133">
        <id>P50895</id>
    </interactant>
    <interactant intactId="EBI-2813981">
        <id>Q9C029</id>
        <label>TRIM7</label>
    </interactant>
    <organismsDiffer>false</organismsDiffer>
    <experiments>3</experiments>
</comment>
<comment type="subcellular location">
    <subcellularLocation>
        <location evidence="5 12">Cell membrane</location>
        <topology>Single-pass type I membrane protein</topology>
    </subcellularLocation>
</comment>
<comment type="tissue specificity">
    <text>Wide tissue distribution (highest in the pancreas and very low in brain). Closely associated with the basal layer of cells in epithelia and the endothelium of blood vessel walls.</text>
</comment>
<comment type="developmental stage">
    <text>Is under developmental control in liver and may also be regulated during differentiation in other tissues. Up-regulated following malignant transformation in some cell types.</text>
</comment>
<comment type="PTM">
    <text evidence="6 11 12">Epinephrine-stimulated phosphorylation of Ser-621 by PKA enhances adhesion to laminin. Ser-621 can also be phosphorylated by AKT1 (PubMed:23160466, PubMed:31413112).</text>
</comment>
<comment type="polymorphism">
    <text evidence="15 16">BCAM is responsible for the Lutheran blood group system (LU) [MIM:111200]. Lutheran is a complex blood group system consisting of 19 antigens. Antigens Lu(a) and Lu(b) are defined by a polymorphism at position 77: Lu(a) has His-77 and Lu(b) has Arg-77.</text>
</comment>
<comment type="polymorphism">
    <text evidence="9">Inactivating variants in BCAM are responsible for the recessive Lutheran null phenotype Lu(a-b-) of the Lutheran blood group [MIM:247420]. Autosomal recessive inheritance of the Lutheran null blood group phenotype is extremely rare. There is no obvious associated clinical or hematologic pathology, and all patients have been identified through identification of anti-Lu3 antibodies in their serum.</text>
</comment>
<comment type="sequence caution" evidence="20">
    <conflict type="erroneous gene model prediction">
        <sequence resource="EMBL-CDS" id="EAW57297"/>
    </conflict>
</comment>
<accession>P50895</accession>
<accession>A8MYF9</accession>
<accession>A9YWT5</accession>
<accession>A9YWT6</accession>
<accession>Q86VC7</accession>
<proteinExistence type="evidence at protein level"/>
<reference key="1">
    <citation type="journal article" date="1995" name="Proc. Natl. Acad. Sci. U.S.A.">
        <title>The Lutheran blood group glycoprotein, another member of the immunoglobulin superfamily, is widely expressed in human tissues and is developmentally regulated in human liver.</title>
        <authorList>
            <person name="Parsons S.F."/>
            <person name="Mallinson G."/>
            <person name="Holmes C.H."/>
            <person name="Houlihan J.M."/>
            <person name="Simpson K.L."/>
            <person name="Mawby W.J."/>
            <person name="Spurr N.K."/>
            <person name="Warne D."/>
            <person name="Barclay A.N."/>
            <person name="Anstee D.J."/>
        </authorList>
    </citation>
    <scope>NUCLEOTIDE SEQUENCE [MRNA]</scope>
    <scope>PROTEIN SEQUENCE OF 32-67 AND 182-203</scope>
    <scope>VARIANT ALA-539</scope>
    <source>
        <tissue>Placenta</tissue>
    </source>
</reference>
<reference key="2">
    <citation type="submission" date="2004-12" db="EMBL/GenBank/DDBJ databases">
        <authorList>
            <consortium name="SeattleSNPs variation discovery resource"/>
        </authorList>
    </citation>
    <scope>NUCLEOTIDE SEQUENCE [GENOMIC DNA]</scope>
    <scope>VARIANTS HIS-77; ILE-196; LYS-204; HIS-282; ILE-381; GLN-451 AND LEU-581</scope>
</reference>
<reference key="3">
    <citation type="journal article" date="2004" name="Nature">
        <title>The DNA sequence and biology of human chromosome 19.</title>
        <authorList>
            <person name="Grimwood J."/>
            <person name="Gordon L.A."/>
            <person name="Olsen A.S."/>
            <person name="Terry A."/>
            <person name="Schmutz J."/>
            <person name="Lamerdin J.E."/>
            <person name="Hellsten U."/>
            <person name="Goodstein D."/>
            <person name="Couronne O."/>
            <person name="Tran-Gyamfi M."/>
            <person name="Aerts A."/>
            <person name="Altherr M."/>
            <person name="Ashworth L."/>
            <person name="Bajorek E."/>
            <person name="Black S."/>
            <person name="Branscomb E."/>
            <person name="Caenepeel S."/>
            <person name="Carrano A.V."/>
            <person name="Caoile C."/>
            <person name="Chan Y.M."/>
            <person name="Christensen M."/>
            <person name="Cleland C.A."/>
            <person name="Copeland A."/>
            <person name="Dalin E."/>
            <person name="Dehal P."/>
            <person name="Denys M."/>
            <person name="Detter J.C."/>
            <person name="Escobar J."/>
            <person name="Flowers D."/>
            <person name="Fotopulos D."/>
            <person name="Garcia C."/>
            <person name="Georgescu A.M."/>
            <person name="Glavina T."/>
            <person name="Gomez M."/>
            <person name="Gonzales E."/>
            <person name="Groza M."/>
            <person name="Hammon N."/>
            <person name="Hawkins T."/>
            <person name="Haydu L."/>
            <person name="Ho I."/>
            <person name="Huang W."/>
            <person name="Israni S."/>
            <person name="Jett J."/>
            <person name="Kadner K."/>
            <person name="Kimball H."/>
            <person name="Kobayashi A."/>
            <person name="Larionov V."/>
            <person name="Leem S.-H."/>
            <person name="Lopez F."/>
            <person name="Lou Y."/>
            <person name="Lowry S."/>
            <person name="Malfatti S."/>
            <person name="Martinez D."/>
            <person name="McCready P.M."/>
            <person name="Medina C."/>
            <person name="Morgan J."/>
            <person name="Nelson K."/>
            <person name="Nolan M."/>
            <person name="Ovcharenko I."/>
            <person name="Pitluck S."/>
            <person name="Pollard M."/>
            <person name="Popkie A.P."/>
            <person name="Predki P."/>
            <person name="Quan G."/>
            <person name="Ramirez L."/>
            <person name="Rash S."/>
            <person name="Retterer J."/>
            <person name="Rodriguez A."/>
            <person name="Rogers S."/>
            <person name="Salamov A."/>
            <person name="Salazar A."/>
            <person name="She X."/>
            <person name="Smith D."/>
            <person name="Slezak T."/>
            <person name="Solovyev V."/>
            <person name="Thayer N."/>
            <person name="Tice H."/>
            <person name="Tsai M."/>
            <person name="Ustaszewska A."/>
            <person name="Vo N."/>
            <person name="Wagner M."/>
            <person name="Wheeler J."/>
            <person name="Wu K."/>
            <person name="Xie G."/>
            <person name="Yang J."/>
            <person name="Dubchak I."/>
            <person name="Furey T.S."/>
            <person name="DeJong P."/>
            <person name="Dickson M."/>
            <person name="Gordon D."/>
            <person name="Eichler E.E."/>
            <person name="Pennacchio L.A."/>
            <person name="Richardson P."/>
            <person name="Stubbs L."/>
            <person name="Rokhsar D.S."/>
            <person name="Myers R.M."/>
            <person name="Rubin E.M."/>
            <person name="Lucas S.M."/>
        </authorList>
    </citation>
    <scope>NUCLEOTIDE SEQUENCE [LARGE SCALE GENOMIC DNA]</scope>
</reference>
<reference key="4">
    <citation type="submission" date="2005-07" db="EMBL/GenBank/DDBJ databases">
        <authorList>
            <person name="Mural R.J."/>
            <person name="Istrail S."/>
            <person name="Sutton G.G."/>
            <person name="Florea L."/>
            <person name="Halpern A.L."/>
            <person name="Mobarry C.M."/>
            <person name="Lippert R."/>
            <person name="Walenz B."/>
            <person name="Shatkay H."/>
            <person name="Dew I."/>
            <person name="Miller J.R."/>
            <person name="Flanigan M.J."/>
            <person name="Edwards N.J."/>
            <person name="Bolanos R."/>
            <person name="Fasulo D."/>
            <person name="Halldorsson B.V."/>
            <person name="Hannenhalli S."/>
            <person name="Turner R."/>
            <person name="Yooseph S."/>
            <person name="Lu F."/>
            <person name="Nusskern D.R."/>
            <person name="Shue B.C."/>
            <person name="Zheng X.H."/>
            <person name="Zhong F."/>
            <person name="Delcher A.L."/>
            <person name="Huson D.H."/>
            <person name="Kravitz S.A."/>
            <person name="Mouchard L."/>
            <person name="Reinert K."/>
            <person name="Remington K.A."/>
            <person name="Clark A.G."/>
            <person name="Waterman M.S."/>
            <person name="Eichler E.E."/>
            <person name="Adams M.D."/>
            <person name="Hunkapiller M.W."/>
            <person name="Myers E.W."/>
            <person name="Venter J.C."/>
        </authorList>
    </citation>
    <scope>NUCLEOTIDE SEQUENCE [LARGE SCALE GENOMIC DNA]</scope>
</reference>
<reference key="5">
    <citation type="journal article" date="2004" name="Genome Res.">
        <title>The status, quality, and expansion of the NIH full-length cDNA project: the Mammalian Gene Collection (MGC).</title>
        <authorList>
            <consortium name="The MGC Project Team"/>
        </authorList>
    </citation>
    <scope>NUCLEOTIDE SEQUENCE [LARGE SCALE MRNA]</scope>
    <source>
        <tissue>Brain</tissue>
    </source>
</reference>
<reference key="6">
    <citation type="journal article" date="1994" name="Cancer Res.">
        <title>Molecular cloning of the B-CAM cell surface glycoprotein of epithelial cancers: a novel member of the immunoglobulin superfamily.</title>
        <authorList>
            <person name="Campbell I.G."/>
            <person name="Foulkes W.D."/>
            <person name="Senger G."/>
            <person name="Trowsdale J."/>
            <person name="Garin-Chesa P."/>
            <person name="Rettig W.J."/>
        </authorList>
    </citation>
    <scope>NUCLEOTIDE SEQUENCE [MRNA] OF 1-588</scope>
    <scope>VARIANT ALA-539</scope>
</reference>
<reference key="7">
    <citation type="submission" date="2007-11" db="EMBL/GenBank/DDBJ databases">
        <title>Molecular basis of Lub(-) individual among Chinese blood donors in Shanghai area.</title>
        <authorList>
            <person name="Wang C."/>
            <person name="Li Q."/>
            <person name="Guo Z."/>
            <person name="Yang Y."/>
            <person name="Zhu Z."/>
        </authorList>
    </citation>
    <scope>NUCLEOTIDE SEQUENCE [GENOMIC DNA] OF 492-539</scope>
    <scope>VARIANT ALA-539</scope>
</reference>
<reference key="8">
    <citation type="journal article" date="1997" name="Blood">
        <title>Use of domain-deletion mutants to locate Lutheran blood group antigens to each of the five immunoglobulin superfamily domains of the Lutheran glycoprotein: elucidation of the molecular basis of the Lu(a)/Lu(b) and the Au(a)/Au(b) polymorphisms.</title>
        <authorList>
            <person name="Parsons S.F."/>
            <person name="Mallinson G."/>
            <person name="Daniels G.L."/>
            <person name="Green C.A."/>
            <person name="Smythe J.S."/>
            <person name="Anstee D.J."/>
        </authorList>
    </citation>
    <scope>LU(A)/LU(B) POLYMORPHISM</scope>
</reference>
<reference key="9">
    <citation type="journal article" date="1997" name="Blood">
        <title>Organization of the human LU gene and molecular basis of the Lu(a)/Lu(b) blood group polymorphism.</title>
        <authorList>
            <person name="El Nemer W."/>
            <person name="Rahuel C."/>
            <person name="Colin Y."/>
            <person name="Gane P."/>
            <person name="Cartron J.P."/>
            <person name="Le Van Kim C."/>
        </authorList>
    </citation>
    <scope>LU(A)/LU(B) POLYMORPHISM</scope>
</reference>
<reference key="10">
    <citation type="journal article" date="1998" name="J. Clin. Invest.">
        <title>Basal cell adhesion molecule/lutheran protein. The receptor critical for sickle cell adhesion to laminin.</title>
        <authorList>
            <person name="Udani M."/>
            <person name="Zen Q."/>
            <person name="Cottman M."/>
            <person name="Leonard N."/>
            <person name="Jefferson S."/>
            <person name="Daymont C."/>
            <person name="Truskey G."/>
            <person name="Telen M.J."/>
        </authorList>
    </citation>
    <scope>FUNCTION</scope>
</reference>
<reference key="11">
    <citation type="journal article" date="2003" name="Nat. Biotechnol.">
        <title>Identification and quantification of N-linked glycoproteins using hydrazide chemistry, stable isotope labeling and mass spectrometry.</title>
        <authorList>
            <person name="Zhang H."/>
            <person name="Li X.-J."/>
            <person name="Martin D.B."/>
            <person name="Aebersold R."/>
        </authorList>
    </citation>
    <scope>GLYCOSYLATION AT ASN-439</scope>
</reference>
<reference key="12">
    <citation type="journal article" date="2004" name="Br. J. Haematol.">
        <title>Direct interaction between the Lu/B-CAM adhesion glycoproteins and erythroid spectrin.</title>
        <authorList>
            <person name="Kroviarski Y."/>
            <person name="El Nemer W."/>
            <person name="Gane P."/>
            <person name="Rahuel C."/>
            <person name="Gauthier E."/>
            <person name="Lecomte M.C."/>
            <person name="Cartron J.P."/>
            <person name="Colin Y."/>
            <person name="Le Van Kim C."/>
        </authorList>
    </citation>
    <scope>SUBCELLULAR LOCATION</scope>
    <scope>INTERACTION WITH SPTA1 AND SPTB1</scope>
    <scope>MUTAGENESIS OF GLU-584 AND LYS-585</scope>
</reference>
<reference key="13">
    <citation type="journal article" date="2005" name="J. Biol. Chem.">
        <title>Protein kinase A-dependent phosphorylation of Lutheran/basal cell adhesion molecule glycoprotein regulates cell adhesion to laminin alpha5.</title>
        <authorList>
            <person name="Gauthier E."/>
            <person name="Rahuel C."/>
            <person name="Wautier M.P."/>
            <person name="El Nemer W."/>
            <person name="Gane P."/>
            <person name="Wautier J.L."/>
            <person name="Cartron J.P."/>
            <person name="Colin Y."/>
            <person name="Le Van Kim C."/>
        </authorList>
    </citation>
    <scope>PHOSPHORYLATION AT SER-596; SER-598 AND SER-621</scope>
    <scope>MUTAGENESIS OF SER-621</scope>
    <scope>FUNCTION</scope>
</reference>
<reference key="14">
    <citation type="journal article" date="2005" name="J. Proteome Res.">
        <title>Human plasma N-glycoproteome analysis by immunoaffinity subtraction, hydrazide chemistry, and mass spectrometry.</title>
        <authorList>
            <person name="Liu T."/>
            <person name="Qian W.-J."/>
            <person name="Gritsenko M.A."/>
            <person name="Camp D.G. II"/>
            <person name="Monroe M.E."/>
            <person name="Moore R.J."/>
            <person name="Smith R.D."/>
        </authorList>
    </citation>
    <scope>GLYCOSYLATION [LARGE SCALE ANALYSIS] AT ASN-439</scope>
    <source>
        <tissue>Plasma</tissue>
    </source>
</reference>
<reference key="15">
    <citation type="journal article" date="2007" name="Transfusion">
        <title>Different inactivating mutations in the LU genes of three individuals with the Lutheran-null phenotype.</title>
        <authorList>
            <person name="Karamatic Crew V."/>
            <person name="Mallinson G."/>
            <person name="Green C."/>
            <person name="Poole J."/>
            <person name="Uchikawa M."/>
            <person name="Tani Y."/>
            <person name="Geisen C."/>
            <person name="Oldenburg J."/>
            <person name="Daniels G."/>
        </authorList>
    </citation>
    <scope>POLYMORPHISM</scope>
    <scope>INVOLVEMENT IN THE LUTHERAN NULL PHENOTYPE</scope>
</reference>
<reference key="16">
    <citation type="journal article" date="2007" name="Blood">
        <title>Endothelial Lu/BCAM glycoproteins are novel ligands for red blood cell alpha4beta1 integrin: role in adhesion of sickle red blood cells to endothelial cells.</title>
        <authorList>
            <person name="El Nemer W."/>
            <person name="Wautier M.P."/>
            <person name="Rahuel C."/>
            <person name="Gane P."/>
            <person name="Hermand P."/>
            <person name="Galacteros F."/>
            <person name="Wautier J.L."/>
            <person name="Cartron J.P."/>
            <person name="Colin Y."/>
            <person name="Le Van Kim C."/>
        </authorList>
    </citation>
    <scope>FUNCTION</scope>
    <scope>INTERACTION WITH ITGA4 AND ITGB1</scope>
</reference>
<reference key="17">
    <citation type="journal article" date="2011" name="BMC Syst. Biol.">
        <title>Initial characterization of the human central proteome.</title>
        <authorList>
            <person name="Burkard T.R."/>
            <person name="Planyavsky M."/>
            <person name="Kaupe I."/>
            <person name="Breitwieser F.P."/>
            <person name="Buerckstuemmer T."/>
            <person name="Bennett K.L."/>
            <person name="Superti-Furga G."/>
            <person name="Colinge J."/>
        </authorList>
    </citation>
    <scope>IDENTIFICATION BY MASS SPECTROMETRY [LARGE SCALE ANALYSIS]</scope>
</reference>
<reference key="18">
    <citation type="journal article" date="2013" name="Blood">
        <title>JAK2V617F activates Lu/BCAM-mediated red cell adhesion in polycythemia vera through an EpoR-independent Rap1/Akt pathway.</title>
        <authorList>
            <person name="De Grandis M."/>
            <person name="Cambot M."/>
            <person name="Wautier M.P."/>
            <person name="Cassinat B."/>
            <person name="Chomienne C."/>
            <person name="Colin Y."/>
            <person name="Wautier J.L."/>
            <person name="Le Van Kim C."/>
            <person name="El Nemer W."/>
        </authorList>
    </citation>
    <scope>FUNCTION</scope>
    <scope>PHOSPHORYLATION AT SER-621</scope>
</reference>
<reference key="19">
    <citation type="journal article" date="2014" name="J. Proteomics">
        <title>An enzyme assisted RP-RPLC approach for in-depth analysis of human liver phosphoproteome.</title>
        <authorList>
            <person name="Bian Y."/>
            <person name="Song C."/>
            <person name="Cheng K."/>
            <person name="Dong M."/>
            <person name="Wang F."/>
            <person name="Huang J."/>
            <person name="Sun D."/>
            <person name="Wang L."/>
            <person name="Ye M."/>
            <person name="Zou H."/>
        </authorList>
    </citation>
    <scope>PHOSPHORYLATION [LARGE SCALE ANALYSIS] AT SER-600</scope>
    <scope>IDENTIFICATION BY MASS SPECTROMETRY [LARGE SCALE ANALYSIS]</scope>
    <source>
        <tissue>Liver</tissue>
    </source>
</reference>
<reference key="20">
    <citation type="journal article" date="2019" name="J. Biol. Chem.">
        <title>Dimerization and phosphorylation of Lutheran/basal cell adhesion molecule are critical for its function in cell migration on laminin.</title>
        <authorList>
            <person name="Guadall A."/>
            <person name="Cochet S."/>
            <person name="Renaud O."/>
            <person name="Colin Y."/>
            <person name="Le Van Kim C."/>
            <person name="de Brevern A.G."/>
            <person name="El Nemer W."/>
        </authorList>
    </citation>
    <scope>FUNCTION</scope>
    <scope>SUBUNIT</scope>
    <scope>SUBCELLULAR LOCATION</scope>
    <scope>PHOSPHORYLATION AT SER-621</scope>
    <scope>MUTAGENESIS OF SER-621</scope>
</reference>
<reference key="21">
    <citation type="journal article" date="2007" name="Blood">
        <title>The Laminin 511/521-binding site on the Lutheran blood group glycoprotein is located at the flexible junction of Ig domains 2 and 3.</title>
        <authorList>
            <person name="Mankelow T.J."/>
            <person name="Burton N."/>
            <person name="Stefansdottir F.O."/>
            <person name="Spring F.A."/>
            <person name="Parsons S.F."/>
            <person name="Pedersen J.S."/>
            <person name="Oliveira C.L."/>
            <person name="Lammie D."/>
            <person name="Wess T."/>
            <person name="Mohandas N."/>
            <person name="Chasis J.A."/>
            <person name="Brady R.L."/>
            <person name="Anstee D.J."/>
        </authorList>
    </citation>
    <scope>X-RAY CRYSTALLOGRAPHY (1.7 ANGSTROMS) OF 32-262</scope>
    <scope>LAMININ-ALPHA5 BINDING REGION</scope>
    <scope>DISULFIDE BONDS</scope>
</reference>
<keyword id="KW-0002">3D-structure</keyword>
<keyword id="KW-0095">Blood group antigen</keyword>
<keyword id="KW-0130">Cell adhesion</keyword>
<keyword id="KW-1003">Cell membrane</keyword>
<keyword id="KW-0903">Direct protein sequencing</keyword>
<keyword id="KW-1015">Disulfide bond</keyword>
<keyword id="KW-0325">Glycoprotein</keyword>
<keyword id="KW-0393">Immunoglobulin domain</keyword>
<keyword id="KW-0472">Membrane</keyword>
<keyword id="KW-0597">Phosphoprotein</keyword>
<keyword id="KW-1267">Proteomics identification</keyword>
<keyword id="KW-0675">Receptor</keyword>
<keyword id="KW-1185">Reference proteome</keyword>
<keyword id="KW-0677">Repeat</keyword>
<keyword id="KW-0732">Signal</keyword>
<keyword id="KW-0812">Transmembrane</keyword>
<keyword id="KW-1133">Transmembrane helix</keyword>
<protein>
    <recommendedName>
        <fullName>Basal cell adhesion molecule</fullName>
    </recommendedName>
    <alternativeName>
        <fullName>Auberger B antigen</fullName>
    </alternativeName>
    <alternativeName>
        <fullName>B-CAM cell surface glycoprotein</fullName>
    </alternativeName>
    <alternativeName>
        <fullName>F8/G253 antigen</fullName>
    </alternativeName>
    <alternativeName>
        <fullName>Lutheran antigen</fullName>
    </alternativeName>
    <alternativeName>
        <fullName>Lutheran blood group glycoprotein</fullName>
    </alternativeName>
    <cdAntigenName>CD239</cdAntigenName>
</protein>
<organism>
    <name type="scientific">Homo sapiens</name>
    <name type="common">Human</name>
    <dbReference type="NCBI Taxonomy" id="9606"/>
    <lineage>
        <taxon>Eukaryota</taxon>
        <taxon>Metazoa</taxon>
        <taxon>Chordata</taxon>
        <taxon>Craniata</taxon>
        <taxon>Vertebrata</taxon>
        <taxon>Euteleostomi</taxon>
        <taxon>Mammalia</taxon>
        <taxon>Eutheria</taxon>
        <taxon>Euarchontoglires</taxon>
        <taxon>Primates</taxon>
        <taxon>Haplorrhini</taxon>
        <taxon>Catarrhini</taxon>
        <taxon>Hominidae</taxon>
        <taxon>Homo</taxon>
    </lineage>
</organism>
<sequence length="628" mass="67405">MEPPDAPAQARGAPRLLLLAVLLAAHPDAQAEVRLSVPPLVEVMRGKSVILDCTPTGTHDHYMLEWFLTDRSGARPRLASAEMQGSELQVTMHDTRGRSPPYQLDSQGRLVLAEAQVGDERDYVCVVRAGAAGTAEATARLNVFAKPEATEVSPNKGTLSVMEDSAQEIATCNSRNGNPAPKITWYRNGQRLEVPVEMNPEGYMTSRTVREASGLLSLTSTLYLRLRKDDRDASFHCAAHYSLPEGRHGRLDSPTFHLTLHYPTEHVQFWVGSPSTPAGWVREGDTVQLLCRGDGSPSPEYTLFRLQDEQEEVLNVNLEGNLTLEGVTRGQSGTYGCRVEDYDAADDVQLSKTLELRVAYLDPLELSEGKVLSLPLNSSAVVNCSVHGLPTPALRWTKDSTPLGDGPMLSLSSITFDSNGTYVCEASLPTVPVLSRTQNFTLLVQGSPELKTAEIEPKADGSWREGDEVTLICSARGHPDPKLSWSQLGGSPAEPIPGRQGWVSSSLTLKVTSALSRDGISCEASNPHGNKRHVFHFGTVSPQTSQAGVAVMAVAVSVGLLLLVVAVFYCVRRKGGPCCRQRREKGAPPPGEPGLSHSGSEQPEQTGLLMGGASGGARGGSGGFGDEC</sequence>
<evidence type="ECO:0000255" key="1"/>
<evidence type="ECO:0000255" key="2">
    <source>
        <dbReference type="PROSITE-ProRule" id="PRU00114"/>
    </source>
</evidence>
<evidence type="ECO:0000256" key="3">
    <source>
        <dbReference type="SAM" id="MobiDB-lite"/>
    </source>
</evidence>
<evidence type="ECO:0000269" key="4">
    <source>
    </source>
</evidence>
<evidence type="ECO:0000269" key="5">
    <source>
    </source>
</evidence>
<evidence type="ECO:0000269" key="6">
    <source>
    </source>
</evidence>
<evidence type="ECO:0000269" key="7">
    <source>
    </source>
</evidence>
<evidence type="ECO:0000269" key="8">
    <source>
    </source>
</evidence>
<evidence type="ECO:0000269" key="9">
    <source>
    </source>
</evidence>
<evidence type="ECO:0000269" key="10">
    <source>
    </source>
</evidence>
<evidence type="ECO:0000269" key="11">
    <source>
    </source>
</evidence>
<evidence type="ECO:0000269" key="12">
    <source>
    </source>
</evidence>
<evidence type="ECO:0000269" key="13">
    <source>
    </source>
</evidence>
<evidence type="ECO:0000269" key="14">
    <source>
    </source>
</evidence>
<evidence type="ECO:0000269" key="15">
    <source>
    </source>
</evidence>
<evidence type="ECO:0000269" key="16">
    <source>
    </source>
</evidence>
<evidence type="ECO:0000269" key="17">
    <source>
    </source>
</evidence>
<evidence type="ECO:0000269" key="18">
    <source ref="2"/>
</evidence>
<evidence type="ECO:0000269" key="19">
    <source ref="7"/>
</evidence>
<evidence type="ECO:0000305" key="20"/>
<evidence type="ECO:0000305" key="21">
    <source>
    </source>
</evidence>
<evidence type="ECO:0007744" key="22">
    <source>
    </source>
</evidence>
<evidence type="ECO:0007829" key="23">
    <source>
        <dbReference type="PDB" id="2PET"/>
    </source>
</evidence>
<evidence type="ECO:0007829" key="24">
    <source>
        <dbReference type="PDB" id="2PF6"/>
    </source>
</evidence>
<dbReference type="EMBL" id="X83425">
    <property type="protein sequence ID" value="CAA58449.1"/>
    <property type="molecule type" value="mRNA"/>
</dbReference>
<dbReference type="EMBL" id="AY845133">
    <property type="protein sequence ID" value="AAV88096.1"/>
    <property type="molecule type" value="Genomic_DNA"/>
</dbReference>
<dbReference type="EMBL" id="AC092306">
    <property type="status" value="NOT_ANNOTATED_CDS"/>
    <property type="molecule type" value="Genomic_DNA"/>
</dbReference>
<dbReference type="EMBL" id="CH471126">
    <property type="protein sequence ID" value="EAW57297.1"/>
    <property type="status" value="ALT_SEQ"/>
    <property type="molecule type" value="Genomic_DNA"/>
</dbReference>
<dbReference type="EMBL" id="BC050450">
    <property type="protein sequence ID" value="AAH50450.1"/>
    <property type="molecule type" value="mRNA"/>
</dbReference>
<dbReference type="EMBL" id="X80026">
    <property type="protein sequence ID" value="CAA56327.1"/>
    <property type="molecule type" value="mRNA"/>
</dbReference>
<dbReference type="EMBL" id="EU307108">
    <property type="protein sequence ID" value="ABY27636.1"/>
    <property type="molecule type" value="Genomic_DNA"/>
</dbReference>
<dbReference type="EMBL" id="EU307109">
    <property type="protein sequence ID" value="ABY27637.1"/>
    <property type="molecule type" value="Genomic_DNA"/>
</dbReference>
<dbReference type="CCDS" id="CCDS12644.1"/>
<dbReference type="PIR" id="I37202">
    <property type="entry name" value="I37202"/>
</dbReference>
<dbReference type="PIR" id="I38000">
    <property type="entry name" value="I38000"/>
</dbReference>
<dbReference type="RefSeq" id="NP_001013275.1">
    <property type="nucleotide sequence ID" value="NM_001013257.2"/>
</dbReference>
<dbReference type="RefSeq" id="NP_005572.2">
    <property type="nucleotide sequence ID" value="NM_005581.4"/>
</dbReference>
<dbReference type="PDB" id="2PET">
    <property type="method" value="X-ray"/>
    <property type="resolution" value="1.70 A"/>
    <property type="chains" value="A=32-262"/>
</dbReference>
<dbReference type="PDB" id="2PF6">
    <property type="method" value="X-ray"/>
    <property type="resolution" value="2.20 A"/>
    <property type="chains" value="A/B=32-262"/>
</dbReference>
<dbReference type="PDBsum" id="2PET"/>
<dbReference type="PDBsum" id="2PF6"/>
<dbReference type="SMR" id="P50895"/>
<dbReference type="BioGRID" id="110237">
    <property type="interactions" value="59"/>
</dbReference>
<dbReference type="ELM" id="P50895"/>
<dbReference type="FunCoup" id="P50895">
    <property type="interactions" value="466"/>
</dbReference>
<dbReference type="IntAct" id="P50895">
    <property type="interactions" value="49"/>
</dbReference>
<dbReference type="MINT" id="P50895"/>
<dbReference type="STRING" id="9606.ENSP00000270233"/>
<dbReference type="GlyConnect" id="1026">
    <property type="glycosylation" value="9 N-Linked glycans (2 sites)"/>
</dbReference>
<dbReference type="GlyCosmos" id="P50895">
    <property type="glycosylation" value="5 sites, 9 glycans"/>
</dbReference>
<dbReference type="GlyGen" id="P50895">
    <property type="glycosylation" value="8 sites, 64 N-linked glycans (4 sites), 2 O-linked glycans (2 sites)"/>
</dbReference>
<dbReference type="iPTMnet" id="P50895"/>
<dbReference type="PhosphoSitePlus" id="P50895"/>
<dbReference type="SwissPalm" id="P50895"/>
<dbReference type="BioMuta" id="BCAM"/>
<dbReference type="DMDM" id="92058724"/>
<dbReference type="CPTAC" id="CPTAC-174"/>
<dbReference type="CPTAC" id="CPTAC-175"/>
<dbReference type="jPOST" id="P50895"/>
<dbReference type="MassIVE" id="P50895"/>
<dbReference type="PaxDb" id="9606-ENSP00000270233"/>
<dbReference type="PeptideAtlas" id="P50895"/>
<dbReference type="ProteomicsDB" id="56268"/>
<dbReference type="Pumba" id="P50895"/>
<dbReference type="ABCD" id="P50895">
    <property type="antibodies" value="1 sequenced antibody"/>
</dbReference>
<dbReference type="Antibodypedia" id="17750">
    <property type="antibodies" value="436 antibodies from 36 providers"/>
</dbReference>
<dbReference type="DNASU" id="4059"/>
<dbReference type="Ensembl" id="ENST00000270233.12">
    <property type="protein sequence ID" value="ENSP00000270233.5"/>
    <property type="gene ID" value="ENSG00000187244.12"/>
</dbReference>
<dbReference type="GeneID" id="4059"/>
<dbReference type="KEGG" id="hsa:4059"/>
<dbReference type="MANE-Select" id="ENST00000270233.12">
    <property type="protein sequence ID" value="ENSP00000270233.5"/>
    <property type="RefSeq nucleotide sequence ID" value="NM_005581.5"/>
    <property type="RefSeq protein sequence ID" value="NP_005572.2"/>
</dbReference>
<dbReference type="UCSC" id="uc002ozu.5">
    <property type="organism name" value="human"/>
</dbReference>
<dbReference type="AGR" id="HGNC:6722"/>
<dbReference type="CTD" id="4059"/>
<dbReference type="DisGeNET" id="4059"/>
<dbReference type="GeneCards" id="BCAM"/>
<dbReference type="HGNC" id="HGNC:6722">
    <property type="gene designation" value="BCAM"/>
</dbReference>
<dbReference type="HPA" id="ENSG00000187244">
    <property type="expression patterns" value="Tissue enhanced (kidney)"/>
</dbReference>
<dbReference type="MalaCards" id="BCAM"/>
<dbReference type="MIM" id="111200">
    <property type="type" value="phenotype"/>
</dbReference>
<dbReference type="MIM" id="247420">
    <property type="type" value="phenotype"/>
</dbReference>
<dbReference type="MIM" id="612773">
    <property type="type" value="gene"/>
</dbReference>
<dbReference type="neXtProt" id="NX_P50895"/>
<dbReference type="OpenTargets" id="ENSG00000187244"/>
<dbReference type="PharmGKB" id="PA30484"/>
<dbReference type="VEuPathDB" id="HostDB:ENSG00000187244"/>
<dbReference type="eggNOG" id="ENOG502QWC8">
    <property type="taxonomic scope" value="Eukaryota"/>
</dbReference>
<dbReference type="GeneTree" id="ENSGT00940000161038"/>
<dbReference type="HOGENOM" id="CLU_028888_1_0_1"/>
<dbReference type="InParanoid" id="P50895"/>
<dbReference type="OMA" id="GYMTIRT"/>
<dbReference type="OrthoDB" id="10010939at2759"/>
<dbReference type="PAN-GO" id="P50895">
    <property type="GO annotations" value="2 GO annotations based on evolutionary models"/>
</dbReference>
<dbReference type="PhylomeDB" id="P50895"/>
<dbReference type="TreeFam" id="TF330534"/>
<dbReference type="PathwayCommons" id="P50895"/>
<dbReference type="SignaLink" id="P50895"/>
<dbReference type="BioGRID-ORCS" id="4059">
    <property type="hits" value="18 hits in 1156 CRISPR screens"/>
</dbReference>
<dbReference type="ChiTaRS" id="BCAM">
    <property type="organism name" value="human"/>
</dbReference>
<dbReference type="EvolutionaryTrace" id="P50895"/>
<dbReference type="GeneWiki" id="BCAM"/>
<dbReference type="GenomeRNAi" id="4059"/>
<dbReference type="Pharos" id="P50895">
    <property type="development level" value="Tbio"/>
</dbReference>
<dbReference type="PRO" id="PR:P50895"/>
<dbReference type="Proteomes" id="UP000005640">
    <property type="component" value="Chromosome 19"/>
</dbReference>
<dbReference type="RNAct" id="P50895">
    <property type="molecule type" value="protein"/>
</dbReference>
<dbReference type="Bgee" id="ENSG00000187244">
    <property type="expression patterns" value="Expressed in metanephros cortex and 163 other cell types or tissues"/>
</dbReference>
<dbReference type="ExpressionAtlas" id="P50895">
    <property type="expression patterns" value="baseline and differential"/>
</dbReference>
<dbReference type="GO" id="GO:0062023">
    <property type="term" value="C:collagen-containing extracellular matrix"/>
    <property type="evidence" value="ECO:0007005"/>
    <property type="project" value="BHF-UCL"/>
</dbReference>
<dbReference type="GO" id="GO:0009897">
    <property type="term" value="C:external side of plasma membrane"/>
    <property type="evidence" value="ECO:0000305"/>
    <property type="project" value="BHF-UCL"/>
</dbReference>
<dbReference type="GO" id="GO:0070062">
    <property type="term" value="C:extracellular exosome"/>
    <property type="evidence" value="ECO:0007005"/>
    <property type="project" value="UniProtKB"/>
</dbReference>
<dbReference type="GO" id="GO:0005576">
    <property type="term" value="C:extracellular region"/>
    <property type="evidence" value="ECO:0007005"/>
    <property type="project" value="BHF-UCL"/>
</dbReference>
<dbReference type="GO" id="GO:0005886">
    <property type="term" value="C:plasma membrane"/>
    <property type="evidence" value="ECO:0000314"/>
    <property type="project" value="UniProt"/>
</dbReference>
<dbReference type="GO" id="GO:0043236">
    <property type="term" value="F:laminin binding"/>
    <property type="evidence" value="ECO:0000315"/>
    <property type="project" value="BHF-UCL"/>
</dbReference>
<dbReference type="GO" id="GO:0005055">
    <property type="term" value="F:laminin receptor activity"/>
    <property type="evidence" value="ECO:0000314"/>
    <property type="project" value="UniProt"/>
</dbReference>
<dbReference type="GO" id="GO:0004888">
    <property type="term" value="F:transmembrane signaling receptor activity"/>
    <property type="evidence" value="ECO:0000304"/>
    <property type="project" value="ProtInc"/>
</dbReference>
<dbReference type="GO" id="GO:0001525">
    <property type="term" value="P:angiogenesis"/>
    <property type="evidence" value="ECO:0000318"/>
    <property type="project" value="GO_Central"/>
</dbReference>
<dbReference type="GO" id="GO:0007155">
    <property type="term" value="P:cell adhesion"/>
    <property type="evidence" value="ECO:0000314"/>
    <property type="project" value="UniProt"/>
</dbReference>
<dbReference type="GO" id="GO:0007160">
    <property type="term" value="P:cell-matrix adhesion"/>
    <property type="evidence" value="ECO:0000315"/>
    <property type="project" value="BHF-UCL"/>
</dbReference>
<dbReference type="GO" id="GO:0007165">
    <property type="term" value="P:signal transduction"/>
    <property type="evidence" value="ECO:0000304"/>
    <property type="project" value="ProtInc"/>
</dbReference>
<dbReference type="CDD" id="cd00096">
    <property type="entry name" value="Ig"/>
    <property type="match status" value="3"/>
</dbReference>
<dbReference type="FunFam" id="2.60.40.10:FF:001535">
    <property type="entry name" value="Basal cell adhesion molecule"/>
    <property type="match status" value="1"/>
</dbReference>
<dbReference type="FunFam" id="2.60.40.10:FF:001741">
    <property type="entry name" value="Basal cell adhesion molecule"/>
    <property type="match status" value="1"/>
</dbReference>
<dbReference type="FunFam" id="2.60.40.10:FF:001800">
    <property type="entry name" value="Basal cell adhesion molecule"/>
    <property type="match status" value="1"/>
</dbReference>
<dbReference type="FunFam" id="2.60.40.10:FF:002064">
    <property type="entry name" value="Basal cell adhesion molecule"/>
    <property type="match status" value="1"/>
</dbReference>
<dbReference type="FunFam" id="2.60.40.10:FF:002328">
    <property type="entry name" value="Basal cell adhesion molecule"/>
    <property type="match status" value="1"/>
</dbReference>
<dbReference type="Gene3D" id="2.60.40.10">
    <property type="entry name" value="Immunoglobulins"/>
    <property type="match status" value="5"/>
</dbReference>
<dbReference type="InterPro" id="IPR013162">
    <property type="entry name" value="CD80_C2-set"/>
</dbReference>
<dbReference type="InterPro" id="IPR007110">
    <property type="entry name" value="Ig-like_dom"/>
</dbReference>
<dbReference type="InterPro" id="IPR036179">
    <property type="entry name" value="Ig-like_dom_sf"/>
</dbReference>
<dbReference type="InterPro" id="IPR013783">
    <property type="entry name" value="Ig-like_fold"/>
</dbReference>
<dbReference type="InterPro" id="IPR003599">
    <property type="entry name" value="Ig_sub"/>
</dbReference>
<dbReference type="InterPro" id="IPR003598">
    <property type="entry name" value="Ig_sub2"/>
</dbReference>
<dbReference type="InterPro" id="IPR013106">
    <property type="entry name" value="Ig_V-set"/>
</dbReference>
<dbReference type="InterPro" id="IPR051116">
    <property type="entry name" value="Surface_Rcpt/Adhesion_Mol"/>
</dbReference>
<dbReference type="PANTHER" id="PTHR11973:SF17">
    <property type="entry name" value="BASAL CELL ADHESION MOLECULE"/>
    <property type="match status" value="1"/>
</dbReference>
<dbReference type="PANTHER" id="PTHR11973">
    <property type="entry name" value="CELL SURFACE GLYCOPROTEIN MUC18-RELATED"/>
    <property type="match status" value="1"/>
</dbReference>
<dbReference type="Pfam" id="PF08205">
    <property type="entry name" value="C2-set_2"/>
    <property type="match status" value="1"/>
</dbReference>
<dbReference type="Pfam" id="PF13895">
    <property type="entry name" value="Ig_2"/>
    <property type="match status" value="1"/>
</dbReference>
<dbReference type="Pfam" id="PF13927">
    <property type="entry name" value="Ig_3"/>
    <property type="match status" value="2"/>
</dbReference>
<dbReference type="Pfam" id="PF07686">
    <property type="entry name" value="V-set"/>
    <property type="match status" value="1"/>
</dbReference>
<dbReference type="SMART" id="SM00409">
    <property type="entry name" value="IG"/>
    <property type="match status" value="5"/>
</dbReference>
<dbReference type="SMART" id="SM00408">
    <property type="entry name" value="IGc2"/>
    <property type="match status" value="3"/>
</dbReference>
<dbReference type="SUPFAM" id="SSF48726">
    <property type="entry name" value="Immunoglobulin"/>
    <property type="match status" value="5"/>
</dbReference>
<dbReference type="PROSITE" id="PS50835">
    <property type="entry name" value="IG_LIKE"/>
    <property type="match status" value="5"/>
</dbReference>
<feature type="signal peptide" evidence="13">
    <location>
        <begin position="1"/>
        <end position="31"/>
    </location>
</feature>
<feature type="chain" id="PRO_0000014850" description="Basal cell adhesion molecule">
    <location>
        <begin position="32"/>
        <end position="628"/>
    </location>
</feature>
<feature type="topological domain" description="Extracellular" evidence="1">
    <location>
        <begin position="32"/>
        <end position="547"/>
    </location>
</feature>
<feature type="transmembrane region" description="Helical" evidence="1">
    <location>
        <begin position="548"/>
        <end position="568"/>
    </location>
</feature>
<feature type="topological domain" description="Cytoplasmic" evidence="1">
    <location>
        <begin position="569"/>
        <end position="628"/>
    </location>
</feature>
<feature type="domain" description="Ig-like V-type 1">
    <location>
        <begin position="32"/>
        <end position="142"/>
    </location>
</feature>
<feature type="domain" description="Ig-like V-type 2">
    <location>
        <begin position="147"/>
        <end position="257"/>
    </location>
</feature>
<feature type="domain" description="Ig-like C2-type 1">
    <location>
        <begin position="274"/>
        <end position="355"/>
    </location>
</feature>
<feature type="domain" description="Ig-like C2-type 2">
    <location>
        <begin position="363"/>
        <end position="441"/>
    </location>
</feature>
<feature type="domain" description="Ig-like C2-type 3">
    <location>
        <begin position="448"/>
        <end position="541"/>
    </location>
</feature>
<feature type="region of interest" description="Interaction with laminin alpha5">
    <location>
        <begin position="309"/>
        <end position="312"/>
    </location>
</feature>
<feature type="region of interest" description="Disordered" evidence="3">
    <location>
        <begin position="579"/>
        <end position="628"/>
    </location>
</feature>
<feature type="compositionally biased region" description="Gly residues" evidence="3">
    <location>
        <begin position="609"/>
        <end position="628"/>
    </location>
</feature>
<feature type="modified residue" description="Phosphoserine; by GSK3" evidence="6">
    <location>
        <position position="596"/>
    </location>
</feature>
<feature type="modified residue" description="Phosphoserine; by CK2" evidence="6">
    <location>
        <position position="598"/>
    </location>
</feature>
<feature type="modified residue" description="Phosphoserine" evidence="22">
    <location>
        <position position="600"/>
    </location>
</feature>
<feature type="modified residue" description="Phosphoserine; by PKA or PKB/AKT1" evidence="6 11 12">
    <location>
        <position position="621"/>
    </location>
</feature>
<feature type="glycosylation site" description="N-linked (GlcNAc...) asparagine" evidence="1">
    <location>
        <position position="321"/>
    </location>
</feature>
<feature type="glycosylation site" description="N-linked (GlcNAc...) asparagine" evidence="1">
    <location>
        <position position="377"/>
    </location>
</feature>
<feature type="glycosylation site" description="N-linked (GlcNAc...) asparagine" evidence="1">
    <location>
        <position position="383"/>
    </location>
</feature>
<feature type="glycosylation site" description="N-linked (GlcNAc...) asparagine" evidence="1">
    <location>
        <position position="419"/>
    </location>
</feature>
<feature type="glycosylation site" description="N-linked (GlcNAc...) asparagine" evidence="4 7">
    <location>
        <position position="439"/>
    </location>
</feature>
<feature type="disulfide bond" evidence="2 10">
    <location>
        <begin position="53"/>
        <end position="125"/>
    </location>
</feature>
<feature type="disulfide bond" evidence="2 10">
    <location>
        <begin position="172"/>
        <end position="237"/>
    </location>
</feature>
<feature type="disulfide bond" evidence="21">
    <location>
        <begin position="291"/>
        <end position="337"/>
    </location>
</feature>
<feature type="disulfide bond" evidence="21">
    <location>
        <begin position="384"/>
        <end position="424"/>
    </location>
</feature>
<feature type="disulfide bond" evidence="21">
    <location>
        <begin position="473"/>
        <end position="522"/>
    </location>
</feature>
<feature type="sequence variant" id="VAR_021348" description="Defines the Lu(a) antigen; dbSNP:rs28399653." evidence="18">
    <original>R</original>
    <variation>H</variation>
    <location>
        <position position="77"/>
    </location>
</feature>
<feature type="sequence variant" id="VAR_021349" description="In dbSNP:rs28399654." evidence="18">
    <original>V</original>
    <variation>I</variation>
    <location>
        <position position="196"/>
    </location>
</feature>
<feature type="sequence variant" id="VAR_021350" description="In dbSNP:rs28399656." evidence="18">
    <original>M</original>
    <variation>K</variation>
    <location>
        <position position="204"/>
    </location>
</feature>
<feature type="sequence variant" id="VAR_021351" description="In dbSNP:rs9967601." evidence="18">
    <original>R</original>
    <variation>H</variation>
    <location>
        <position position="282"/>
    </location>
</feature>
<feature type="sequence variant" id="VAR_021352" description="In dbSNP:rs28399626." evidence="18">
    <original>V</original>
    <variation>I</variation>
    <location>
        <position position="381"/>
    </location>
</feature>
<feature type="sequence variant" id="VAR_021353" description="In dbSNP:rs28399630." evidence="18">
    <original>K</original>
    <variation>Q</variation>
    <location>
        <position position="451"/>
    </location>
</feature>
<feature type="sequence variant" id="VAR_021354" description="In dbSNP:rs1135062." evidence="13 14 19">
    <original>T</original>
    <variation>A</variation>
    <location>
        <position position="539"/>
    </location>
</feature>
<feature type="sequence variant" id="VAR_021355" description="In dbSNP:rs28399659." evidence="18">
    <original>Q</original>
    <variation>L</variation>
    <location>
        <position position="581"/>
    </location>
</feature>
<feature type="mutagenesis site" description="Extremely reduced binding to spectrins; when associated with A-585." evidence="5">
    <original>E</original>
    <variation>A</variation>
    <location>
        <position position="584"/>
    </location>
</feature>
<feature type="mutagenesis site" description="Extremely reduced binding to spectrins; when associated with A-584." evidence="5">
    <original>K</original>
    <variation>A</variation>
    <location>
        <position position="585"/>
    </location>
</feature>
<feature type="mutagenesis site" description="Dramatically reduced cell adhesion." evidence="6 12">
    <original>S</original>
    <variation>A</variation>
    <location>
        <position position="621"/>
    </location>
</feature>
<feature type="sequence conflict" description="In Ref. 6; CAA56327." evidence="20" ref="6">
    <original>RL</original>
    <variation>PC</variation>
    <location>
        <begin position="225"/>
        <end position="226"/>
    </location>
</feature>
<feature type="sequence conflict" description="In Ref. 6; CAA56327." evidence="20" ref="6">
    <original>EL</original>
    <variation>DV</variation>
    <location>
        <begin position="355"/>
        <end position="356"/>
    </location>
</feature>
<feature type="sequence conflict" description="In Ref. 7; ABY27636." evidence="20" ref="7">
    <original>R</original>
    <variation>L</variation>
    <location>
        <position position="532"/>
    </location>
</feature>
<feature type="strand" evidence="24">
    <location>
        <begin position="34"/>
        <end position="36"/>
    </location>
</feature>
<feature type="strand" evidence="23">
    <location>
        <begin position="39"/>
        <end position="44"/>
    </location>
</feature>
<feature type="strand" evidence="23">
    <location>
        <begin position="49"/>
        <end position="51"/>
    </location>
</feature>
<feature type="strand" evidence="24">
    <location>
        <begin position="54"/>
        <end position="57"/>
    </location>
</feature>
<feature type="strand" evidence="23">
    <location>
        <begin position="60"/>
        <end position="69"/>
    </location>
</feature>
<feature type="strand" evidence="23">
    <location>
        <begin position="77"/>
        <end position="84"/>
    </location>
</feature>
<feature type="strand" evidence="23">
    <location>
        <begin position="87"/>
        <end position="92"/>
    </location>
</feature>
<feature type="strand" evidence="23">
    <location>
        <begin position="110"/>
        <end position="114"/>
    </location>
</feature>
<feature type="helix" evidence="23">
    <location>
        <begin position="117"/>
        <end position="119"/>
    </location>
</feature>
<feature type="strand" evidence="23">
    <location>
        <begin position="121"/>
        <end position="128"/>
    </location>
</feature>
<feature type="helix" evidence="23">
    <location>
        <begin position="130"/>
        <end position="132"/>
    </location>
</feature>
<feature type="strand" evidence="23">
    <location>
        <begin position="134"/>
        <end position="145"/>
    </location>
</feature>
<feature type="strand" evidence="23">
    <location>
        <begin position="151"/>
        <end position="154"/>
    </location>
</feature>
<feature type="strand" evidence="23">
    <location>
        <begin position="167"/>
        <end position="179"/>
    </location>
</feature>
<feature type="strand" evidence="23">
    <location>
        <begin position="182"/>
        <end position="187"/>
    </location>
</feature>
<feature type="strand" evidence="24">
    <location>
        <begin position="190"/>
        <end position="192"/>
    </location>
</feature>
<feature type="strand" evidence="23">
    <location>
        <begin position="200"/>
        <end position="210"/>
    </location>
</feature>
<feature type="strand" evidence="23">
    <location>
        <begin position="216"/>
        <end position="224"/>
    </location>
</feature>
<feature type="helix" evidence="23">
    <location>
        <begin position="228"/>
        <end position="232"/>
    </location>
</feature>
<feature type="strand" evidence="23">
    <location>
        <begin position="234"/>
        <end position="242"/>
    </location>
</feature>
<feature type="helix" evidence="23">
    <location>
        <begin position="244"/>
        <end position="246"/>
    </location>
</feature>
<feature type="strand" evidence="23">
    <location>
        <begin position="248"/>
        <end position="252"/>
    </location>
</feature>
<gene>
    <name type="primary">BCAM</name>
    <name type="synonym">LU</name>
    <name type="synonym">MSK19</name>
</gene>
<name>BCAM_HUMAN</name>